<protein>
    <recommendedName>
        <fullName evidence="1">Protein Smaug</fullName>
    </recommendedName>
</protein>
<organism>
    <name type="scientific">Drosophila sechellia</name>
    <name type="common">Fruit fly</name>
    <dbReference type="NCBI Taxonomy" id="7238"/>
    <lineage>
        <taxon>Eukaryota</taxon>
        <taxon>Metazoa</taxon>
        <taxon>Ecdysozoa</taxon>
        <taxon>Arthropoda</taxon>
        <taxon>Hexapoda</taxon>
        <taxon>Insecta</taxon>
        <taxon>Pterygota</taxon>
        <taxon>Neoptera</taxon>
        <taxon>Endopterygota</taxon>
        <taxon>Diptera</taxon>
        <taxon>Brachycera</taxon>
        <taxon>Muscomorpha</taxon>
        <taxon>Ephydroidea</taxon>
        <taxon>Drosophilidae</taxon>
        <taxon>Drosophila</taxon>
        <taxon>Sophophora</taxon>
    </lineage>
</organism>
<feature type="chain" id="PRO_0000395317" description="Protein Smaug">
    <location>
        <begin position="1"/>
        <end position="998"/>
    </location>
</feature>
<feature type="domain" description="SAM" evidence="2">
    <location>
        <begin position="600"/>
        <end position="654"/>
    </location>
</feature>
<feature type="region of interest" description="Disordered" evidence="3">
    <location>
        <begin position="1"/>
        <end position="45"/>
    </location>
</feature>
<feature type="region of interest" description="Disordered" evidence="3">
    <location>
        <begin position="50"/>
        <end position="69"/>
    </location>
</feature>
<feature type="region of interest" description="Disordered" evidence="3">
    <location>
        <begin position="329"/>
        <end position="370"/>
    </location>
</feature>
<feature type="region of interest" description="Interaction with cup" evidence="1">
    <location>
        <begin position="583"/>
        <end position="763"/>
    </location>
</feature>
<feature type="region of interest" description="Disordered" evidence="3">
    <location>
        <begin position="773"/>
        <end position="892"/>
    </location>
</feature>
<feature type="region of interest" description="Disordered" evidence="3">
    <location>
        <begin position="943"/>
        <end position="977"/>
    </location>
</feature>
<feature type="compositionally biased region" description="Polar residues" evidence="3">
    <location>
        <begin position="1"/>
        <end position="37"/>
    </location>
</feature>
<feature type="compositionally biased region" description="Low complexity" evidence="3">
    <location>
        <begin position="329"/>
        <end position="338"/>
    </location>
</feature>
<feature type="compositionally biased region" description="Polar residues" evidence="3">
    <location>
        <begin position="801"/>
        <end position="822"/>
    </location>
</feature>
<feature type="compositionally biased region" description="Polar residues" evidence="3">
    <location>
        <begin position="854"/>
        <end position="864"/>
    </location>
</feature>
<feature type="modified residue" description="Phosphoserine" evidence="1">
    <location>
        <position position="564"/>
    </location>
</feature>
<feature type="modified residue" description="Phosphoserine" evidence="1">
    <location>
        <position position="575"/>
    </location>
</feature>
<feature type="modified residue" description="Phosphoserine" evidence="1">
    <location>
        <position position="971"/>
    </location>
</feature>
<sequence length="998" mass="108806">MKYATGTDNAMTSGISGQTNSSNSASNEMQPTTSTPTAVHKEATSTATTTATYANGNPNPSANPSQSQPSNALFCEQVTTVTNLFEKWNDCERTVVMYALLKRLRYPSLKFLQYSIDSNLTQNLGTSQTNLSSVVIDINANNPVYLQNLLNAYKTFQPCDLLDAMSSSSSDKDSMPCYGSDFQITTSAQCDERKLYARKEDILHEVLNMLPLLKPGNEEAKLIYLTLIPVAVKDTMQQIVPTELVQQIFSYLLIHPAITSEDRRSLNIWLRHLEDHIQAAAAGLTNRSYFLQPSPQLVAGGSSTGSGSCSSSATSSSTASCSSVASSSLCPASGSRSSRTNDWQTIAPPSKQLQNKLAGDWRGSGGGSSSGSINPLCDNLNGITLNELASSQNSLGLSLEGSSSLVNGVVAGAGSMLGIGGGDDHDTSFSKNGTEILDFDPVTANMGEACSLASSSLCGRNGGNPVEDRSQPPPNLQQQLLQPPPYASILMGNVGDQFGEINRWSLDSKIAALKTRRSNSLTTQTISSCSSSSNSSVITVNDNCSNSTENLAQFANKPRSFSLSIEHQRGALMNSGSDTRLDEFKPNYIKFHTRNVGMSGIGLWLKSLRLHKYIELFKNMTYEEMLLITEDFLQSVGVTKGASHKLALCIDKLKERGNILNRVEQELLTGQMELSTAVEELTNIVLTPMKPLESPGPPEENIGLRFLKVIDIVTNTLQQDPYAVQDDETLGVLMWILDRSIHNEAFMNHASQLKDLKFKLSKMKISMVPKMHHVKPAGVGPNNGNINKPRWNGKTRKCDSKSGSNDRINNRKNSNDMLNFSLNCLPHPLPHHSQQAPPPLPQFDYNGYGGGPSHQPQYKSSSYPSFMGNPQQQPPPPPSSKSHHHPQQMQQMLQQHNHFPALPQQTPPQSHRRSLNNLILVAGGPQQPQQLIFKPGQGVLTNNGSNDNLGLERNQQPQQQQQRKLSGGVSSAEQQPKKTMAAVVMENLAKFDQHFTLF</sequence>
<keyword id="KW-0963">Cytoplasm</keyword>
<keyword id="KW-0217">Developmental protein</keyword>
<keyword id="KW-0597">Phosphoprotein</keyword>
<keyword id="KW-1185">Reference proteome</keyword>
<keyword id="KW-0678">Repressor</keyword>
<keyword id="KW-0694">RNA-binding</keyword>
<keyword id="KW-0810">Translation regulation</keyword>
<reference evidence="4" key="1">
    <citation type="journal article" date="2007" name="Nature">
        <title>Evolution of genes and genomes on the Drosophila phylogeny.</title>
        <authorList>
            <consortium name="Drosophila 12 genomes consortium"/>
        </authorList>
    </citation>
    <scope>NUCLEOTIDE SEQUENCE [LARGE SCALE GENOMIC DNA]</scope>
    <source>
        <strain evidence="4">Rob3c / Tucson 14021-0248.25</strain>
    </source>
</reference>
<dbReference type="EMBL" id="CH480815">
    <property type="protein sequence ID" value="EDW40800.1"/>
    <property type="molecule type" value="Genomic_DNA"/>
</dbReference>
<dbReference type="SMR" id="B4HKJ7"/>
<dbReference type="STRING" id="7238.B4HKJ7"/>
<dbReference type="EnsemblMetazoa" id="FBtr0207882">
    <property type="protein sequence ID" value="FBpp0206374"/>
    <property type="gene ID" value="FBgn0179759"/>
</dbReference>
<dbReference type="EnsemblMetazoa" id="XM_002029778.2">
    <property type="protein sequence ID" value="XP_002029814.1"/>
    <property type="gene ID" value="LOC6604971"/>
</dbReference>
<dbReference type="GeneID" id="6604971"/>
<dbReference type="KEGG" id="dse:6604971"/>
<dbReference type="CTD" id="39034"/>
<dbReference type="HOGENOM" id="CLU_003304_0_0_1"/>
<dbReference type="OMA" id="HHSQHAQ"/>
<dbReference type="PhylomeDB" id="B4HKJ7"/>
<dbReference type="ChiTaRS" id="smg">
    <property type="organism name" value="fly"/>
</dbReference>
<dbReference type="Proteomes" id="UP000001292">
    <property type="component" value="Unassembled WGS sequence"/>
</dbReference>
<dbReference type="GO" id="GO:0005737">
    <property type="term" value="C:cytoplasm"/>
    <property type="evidence" value="ECO:0000250"/>
    <property type="project" value="UniProtKB"/>
</dbReference>
<dbReference type="GO" id="GO:0000932">
    <property type="term" value="C:P-body"/>
    <property type="evidence" value="ECO:0007669"/>
    <property type="project" value="TreeGrafter"/>
</dbReference>
<dbReference type="GO" id="GO:0003729">
    <property type="term" value="F:mRNA binding"/>
    <property type="evidence" value="ECO:0007669"/>
    <property type="project" value="TreeGrafter"/>
</dbReference>
<dbReference type="GO" id="GO:0030371">
    <property type="term" value="F:translation repressor activity"/>
    <property type="evidence" value="ECO:0000250"/>
    <property type="project" value="UniProtKB"/>
</dbReference>
<dbReference type="GO" id="GO:0017148">
    <property type="term" value="P:negative regulation of translation"/>
    <property type="evidence" value="ECO:0000250"/>
    <property type="project" value="UniProtKB"/>
</dbReference>
<dbReference type="GO" id="GO:0000289">
    <property type="term" value="P:nuclear-transcribed mRNA poly(A) tail shortening"/>
    <property type="evidence" value="ECO:0007669"/>
    <property type="project" value="TreeGrafter"/>
</dbReference>
<dbReference type="GO" id="GO:0006355">
    <property type="term" value="P:regulation of DNA-templated transcription"/>
    <property type="evidence" value="ECO:0007669"/>
    <property type="project" value="InterPro"/>
</dbReference>
<dbReference type="CDD" id="cd09557">
    <property type="entry name" value="SAM_Smaug"/>
    <property type="match status" value="1"/>
</dbReference>
<dbReference type="FunFam" id="1.10.150.50:FF:000076">
    <property type="entry name" value="Smg, isoform B"/>
    <property type="match status" value="1"/>
</dbReference>
<dbReference type="FunFam" id="1.25.40.170:FF:000005">
    <property type="entry name" value="Smg, isoform B"/>
    <property type="match status" value="1"/>
</dbReference>
<dbReference type="Gene3D" id="1.25.40.170">
    <property type="entry name" value="Smaug, PHAT domain"/>
    <property type="match status" value="1"/>
</dbReference>
<dbReference type="Gene3D" id="1.10.150.50">
    <property type="entry name" value="Transcription Factor, Ets-1"/>
    <property type="match status" value="1"/>
</dbReference>
<dbReference type="InterPro" id="IPR016024">
    <property type="entry name" value="ARM-type_fold"/>
</dbReference>
<dbReference type="InterPro" id="IPR015327">
    <property type="entry name" value="PHAT_dom"/>
</dbReference>
<dbReference type="InterPro" id="IPR037093">
    <property type="entry name" value="PHAT_dom_sf"/>
</dbReference>
<dbReference type="InterPro" id="IPR001660">
    <property type="entry name" value="SAM"/>
</dbReference>
<dbReference type="InterPro" id="IPR013761">
    <property type="entry name" value="SAM/pointed_sf"/>
</dbReference>
<dbReference type="InterPro" id="IPR050897">
    <property type="entry name" value="SMAUG/VTS1_RNA-bind"/>
</dbReference>
<dbReference type="InterPro" id="IPR037634">
    <property type="entry name" value="Smaug_SAM"/>
</dbReference>
<dbReference type="PANTHER" id="PTHR12515:SF5">
    <property type="entry name" value="PROTEIN SMAUG"/>
    <property type="match status" value="1"/>
</dbReference>
<dbReference type="PANTHER" id="PTHR12515">
    <property type="entry name" value="STERILE ALPHA MOTIF DOMAIN CONTAINING PROTEIN 4-RELATED"/>
    <property type="match status" value="1"/>
</dbReference>
<dbReference type="Pfam" id="PF09246">
    <property type="entry name" value="PHAT"/>
    <property type="match status" value="1"/>
</dbReference>
<dbReference type="Pfam" id="PF00536">
    <property type="entry name" value="SAM_1"/>
    <property type="match status" value="1"/>
</dbReference>
<dbReference type="SMART" id="SM00454">
    <property type="entry name" value="SAM"/>
    <property type="match status" value="1"/>
</dbReference>
<dbReference type="SUPFAM" id="SSF48371">
    <property type="entry name" value="ARM repeat"/>
    <property type="match status" value="1"/>
</dbReference>
<dbReference type="SUPFAM" id="SSF47769">
    <property type="entry name" value="SAM/Pointed domain"/>
    <property type="match status" value="1"/>
</dbReference>
<name>SMG_DROSE</name>
<accession>B4HKJ7</accession>
<comment type="function">
    <text evidence="1">Translation regulator that binds to the 3'-UTR of specific mRNAs such as nanos (nos) and prevent their translation. Prevents translation of unlocalized nos in the bulk cytoplasm via the recruitment of cup (By similarity).</text>
</comment>
<comment type="subunit">
    <text evidence="1">Interacts with oskar (osk). Binds to the 3'-UTR of nos. Interacts with cup, which in turn recruits eIF4-E, leading to an indirect interaction between smg and eIF4-E that prevents mRNA translation (By similarity).</text>
</comment>
<comment type="subcellular location">
    <subcellularLocation>
        <location evidence="1">Cytoplasm</location>
    </subcellularLocation>
</comment>
<comment type="domain">
    <text evidence="1">The SAM domain mediates the association with the 3'-UTR of specific mRNAs.</text>
</comment>
<comment type="similarity">
    <text evidence="2">Belongs to the SMAUG family.</text>
</comment>
<gene>
    <name evidence="1" type="primary">smg</name>
    <name type="ORF">GM24897</name>
</gene>
<evidence type="ECO:0000250" key="1">
    <source>
        <dbReference type="UniProtKB" id="Q23972"/>
    </source>
</evidence>
<evidence type="ECO:0000255" key="2"/>
<evidence type="ECO:0000256" key="3">
    <source>
        <dbReference type="SAM" id="MobiDB-lite"/>
    </source>
</evidence>
<evidence type="ECO:0000312" key="4">
    <source>
        <dbReference type="EMBL" id="EDW40800.1"/>
    </source>
</evidence>
<proteinExistence type="inferred from homology"/>